<feature type="chain" id="PRO_0000062988" description="Chaperone protein HtpG">
    <location>
        <begin position="1"/>
        <end position="607"/>
    </location>
</feature>
<feature type="region of interest" description="A; substrate-binding" evidence="1">
    <location>
        <begin position="1"/>
        <end position="323"/>
    </location>
</feature>
<feature type="region of interest" description="B" evidence="1">
    <location>
        <begin position="324"/>
        <end position="534"/>
    </location>
</feature>
<feature type="region of interest" description="C" evidence="1">
    <location>
        <begin position="535"/>
        <end position="607"/>
    </location>
</feature>
<name>HTPG_FUSNN</name>
<comment type="function">
    <text evidence="1">Molecular chaperone. Has ATPase activity.</text>
</comment>
<comment type="subunit">
    <text evidence="1">Homodimer.</text>
</comment>
<comment type="subcellular location">
    <subcellularLocation>
        <location evidence="1">Cytoplasm</location>
    </subcellularLocation>
</comment>
<comment type="similarity">
    <text evidence="1">Belongs to the heat shock protein 90 family.</text>
</comment>
<dbReference type="EMBL" id="AE009951">
    <property type="protein sequence ID" value="AAL94527.1"/>
    <property type="molecule type" value="Genomic_DNA"/>
</dbReference>
<dbReference type="RefSeq" id="NP_603228.1">
    <property type="nucleotide sequence ID" value="NC_003454.1"/>
</dbReference>
<dbReference type="RefSeq" id="WP_011016311.1">
    <property type="nucleotide sequence ID" value="NZ_OZ209243.1"/>
</dbReference>
<dbReference type="SMR" id="Q8RGH4"/>
<dbReference type="FunCoup" id="Q8RGH4">
    <property type="interactions" value="253"/>
</dbReference>
<dbReference type="STRING" id="190304.FN0321"/>
<dbReference type="PaxDb" id="190304-FN0321"/>
<dbReference type="EnsemblBacteria" id="AAL94527">
    <property type="protein sequence ID" value="AAL94527"/>
    <property type="gene ID" value="FN0321"/>
</dbReference>
<dbReference type="GeneID" id="79783330"/>
<dbReference type="KEGG" id="fnu:FN0321"/>
<dbReference type="PATRIC" id="fig|190304.8.peg.901"/>
<dbReference type="eggNOG" id="COG0326">
    <property type="taxonomic scope" value="Bacteria"/>
</dbReference>
<dbReference type="HOGENOM" id="CLU_006684_3_0_0"/>
<dbReference type="InParanoid" id="Q8RGH4"/>
<dbReference type="BioCyc" id="FNUC190304:G1FZS-918-MONOMER"/>
<dbReference type="Proteomes" id="UP000002521">
    <property type="component" value="Chromosome"/>
</dbReference>
<dbReference type="GO" id="GO:0005829">
    <property type="term" value="C:cytosol"/>
    <property type="evidence" value="ECO:0000318"/>
    <property type="project" value="GO_Central"/>
</dbReference>
<dbReference type="GO" id="GO:0005524">
    <property type="term" value="F:ATP binding"/>
    <property type="evidence" value="ECO:0000318"/>
    <property type="project" value="GO_Central"/>
</dbReference>
<dbReference type="GO" id="GO:0016887">
    <property type="term" value="F:ATP hydrolysis activity"/>
    <property type="evidence" value="ECO:0000318"/>
    <property type="project" value="GO_Central"/>
</dbReference>
<dbReference type="GO" id="GO:0140662">
    <property type="term" value="F:ATP-dependent protein folding chaperone"/>
    <property type="evidence" value="ECO:0007669"/>
    <property type="project" value="InterPro"/>
</dbReference>
<dbReference type="GO" id="GO:0051082">
    <property type="term" value="F:unfolded protein binding"/>
    <property type="evidence" value="ECO:0000318"/>
    <property type="project" value="GO_Central"/>
</dbReference>
<dbReference type="GO" id="GO:0006974">
    <property type="term" value="P:DNA damage response"/>
    <property type="evidence" value="ECO:0000318"/>
    <property type="project" value="GO_Central"/>
</dbReference>
<dbReference type="GO" id="GO:0006457">
    <property type="term" value="P:protein folding"/>
    <property type="evidence" value="ECO:0000318"/>
    <property type="project" value="GO_Central"/>
</dbReference>
<dbReference type="GO" id="GO:0009408">
    <property type="term" value="P:response to heat"/>
    <property type="evidence" value="ECO:0000318"/>
    <property type="project" value="GO_Central"/>
</dbReference>
<dbReference type="CDD" id="cd16927">
    <property type="entry name" value="HATPase_Hsp90-like"/>
    <property type="match status" value="1"/>
</dbReference>
<dbReference type="FunFam" id="3.30.230.80:FF:000002">
    <property type="entry name" value="Molecular chaperone HtpG"/>
    <property type="match status" value="1"/>
</dbReference>
<dbReference type="FunFam" id="3.30.565.10:FF:000009">
    <property type="entry name" value="Molecular chaperone HtpG"/>
    <property type="match status" value="1"/>
</dbReference>
<dbReference type="Gene3D" id="3.30.230.80">
    <property type="match status" value="1"/>
</dbReference>
<dbReference type="Gene3D" id="3.40.50.11260">
    <property type="match status" value="1"/>
</dbReference>
<dbReference type="Gene3D" id="1.20.120.790">
    <property type="entry name" value="Heat shock protein 90, C-terminal domain"/>
    <property type="match status" value="1"/>
</dbReference>
<dbReference type="Gene3D" id="3.30.565.10">
    <property type="entry name" value="Histidine kinase-like ATPase, C-terminal domain"/>
    <property type="match status" value="1"/>
</dbReference>
<dbReference type="HAMAP" id="MF_00505">
    <property type="entry name" value="HSP90"/>
    <property type="match status" value="1"/>
</dbReference>
<dbReference type="InterPro" id="IPR036890">
    <property type="entry name" value="HATPase_C_sf"/>
</dbReference>
<dbReference type="InterPro" id="IPR019805">
    <property type="entry name" value="Heat_shock_protein_90_CS"/>
</dbReference>
<dbReference type="InterPro" id="IPR037196">
    <property type="entry name" value="HSP90_C"/>
</dbReference>
<dbReference type="InterPro" id="IPR001404">
    <property type="entry name" value="Hsp90_fam"/>
</dbReference>
<dbReference type="InterPro" id="IPR020575">
    <property type="entry name" value="Hsp90_N"/>
</dbReference>
<dbReference type="InterPro" id="IPR020568">
    <property type="entry name" value="Ribosomal_Su5_D2-typ_SF"/>
</dbReference>
<dbReference type="NCBIfam" id="NF003555">
    <property type="entry name" value="PRK05218.1"/>
    <property type="match status" value="1"/>
</dbReference>
<dbReference type="PANTHER" id="PTHR11528">
    <property type="entry name" value="HEAT SHOCK PROTEIN 90 FAMILY MEMBER"/>
    <property type="match status" value="1"/>
</dbReference>
<dbReference type="Pfam" id="PF13589">
    <property type="entry name" value="HATPase_c_3"/>
    <property type="match status" value="1"/>
</dbReference>
<dbReference type="Pfam" id="PF00183">
    <property type="entry name" value="HSP90"/>
    <property type="match status" value="1"/>
</dbReference>
<dbReference type="PIRSF" id="PIRSF002583">
    <property type="entry name" value="Hsp90"/>
    <property type="match status" value="1"/>
</dbReference>
<dbReference type="PRINTS" id="PR00775">
    <property type="entry name" value="HEATSHOCK90"/>
</dbReference>
<dbReference type="SUPFAM" id="SSF55874">
    <property type="entry name" value="ATPase domain of HSP90 chaperone/DNA topoisomerase II/histidine kinase"/>
    <property type="match status" value="1"/>
</dbReference>
<dbReference type="SUPFAM" id="SSF110942">
    <property type="entry name" value="HSP90 C-terminal domain"/>
    <property type="match status" value="1"/>
</dbReference>
<dbReference type="SUPFAM" id="SSF54211">
    <property type="entry name" value="Ribosomal protein S5 domain 2-like"/>
    <property type="match status" value="1"/>
</dbReference>
<dbReference type="PROSITE" id="PS00298">
    <property type="entry name" value="HSP90"/>
    <property type="match status" value="1"/>
</dbReference>
<keyword id="KW-0067">ATP-binding</keyword>
<keyword id="KW-0143">Chaperone</keyword>
<keyword id="KW-0963">Cytoplasm</keyword>
<keyword id="KW-0547">Nucleotide-binding</keyword>
<keyword id="KW-1185">Reference proteome</keyword>
<keyword id="KW-0346">Stress response</keyword>
<organism>
    <name type="scientific">Fusobacterium nucleatum subsp. nucleatum (strain ATCC 25586 / DSM 15643 / BCRC 10681 / CIP 101130 / JCM 8532 / KCTC 2640 / LMG 13131 / VPI 4355)</name>
    <dbReference type="NCBI Taxonomy" id="190304"/>
    <lineage>
        <taxon>Bacteria</taxon>
        <taxon>Fusobacteriati</taxon>
        <taxon>Fusobacteriota</taxon>
        <taxon>Fusobacteriia</taxon>
        <taxon>Fusobacteriales</taxon>
        <taxon>Fusobacteriaceae</taxon>
        <taxon>Fusobacterium</taxon>
    </lineage>
</organism>
<reference key="1">
    <citation type="journal article" date="2002" name="J. Bacteriol.">
        <title>Genome sequence and analysis of the oral bacterium Fusobacterium nucleatum strain ATCC 25586.</title>
        <authorList>
            <person name="Kapatral V."/>
            <person name="Anderson I."/>
            <person name="Ivanova N."/>
            <person name="Reznik G."/>
            <person name="Los T."/>
            <person name="Lykidis A."/>
            <person name="Bhattacharyya A."/>
            <person name="Bartman A."/>
            <person name="Gardner W."/>
            <person name="Grechkin G."/>
            <person name="Zhu L."/>
            <person name="Vasieva O."/>
            <person name="Chu L."/>
            <person name="Kogan Y."/>
            <person name="Chaga O."/>
            <person name="Goltsman E."/>
            <person name="Bernal A."/>
            <person name="Larsen N."/>
            <person name="D'Souza M."/>
            <person name="Walunas T."/>
            <person name="Pusch G."/>
            <person name="Haselkorn R."/>
            <person name="Fonstein M."/>
            <person name="Kyrpides N.C."/>
            <person name="Overbeek R."/>
        </authorList>
    </citation>
    <scope>NUCLEOTIDE SEQUENCE [LARGE SCALE GENOMIC DNA]</scope>
    <source>
        <strain>ATCC 25586 / DSM 15643 / BCRC 10681 / CIP 101130 / JCM 8532 / KCTC 2640 / LMG 13131 / VPI 4355</strain>
    </source>
</reference>
<evidence type="ECO:0000255" key="1">
    <source>
        <dbReference type="HAMAP-Rule" id="MF_00505"/>
    </source>
</evidence>
<protein>
    <recommendedName>
        <fullName evidence="1">Chaperone protein HtpG</fullName>
    </recommendedName>
    <alternativeName>
        <fullName evidence="1">Heat shock protein HtpG</fullName>
    </alternativeName>
    <alternativeName>
        <fullName evidence="1">High temperature protein G</fullName>
    </alternativeName>
</protein>
<gene>
    <name evidence="1" type="primary">htpG</name>
    <name type="ordered locus">FN0321</name>
</gene>
<accession>Q8RGH4</accession>
<proteinExistence type="inferred from homology"/>
<sequence>MKKEEKIFKAETKELLNLMIHSIYTNKEIFLRELISNANDAIDKLKFQSLTDTDILKDNDKFRIDISVDKDNRTLTISDNGIGMTYEEVDDNIGTIAKSGSKLFKEQLEEAKKGDIDIIGQFGVGFYSGFIVADKITLETKSPYSENGVKWISSGDGNYEIEEIAKQDRGTKITLHLKDGDEYNEFLEDWKIKDLVKKYSNYIRYEIYFGDEVINSTKPIWKKDKKELKDDDYNEFYKATFHDWNDPLLHINLKVQGNIEYNALLFIPKKLPFDYYTKNFKRGLQLYTKNVFIMEKCEDLIPEYFNFISGLVDCDSLSLNISREILQQNAELQVISKNLEKKITSELEKILKNDREKYVEFWKEFGRSIKAGVQDMFGMNKEKLQDLLIFVSSHDDKYTTLKEYVDRMGDNKEILYVPAESVDAAKYLPKMEKLKEQGREVLILTDKIDEFTLMAMRDYSGKEFKSINSSDFKFSDDKEKEEEVKKIADENKELIEKAKEFLKDKVSEVELSNNIGNSASSLLAKGGLSLEMEKTLSEMTNNNDMPKAEKVLAINPEHVLFNRLKSSVNTEDFNKLVDVLYNQALLLEGFNIENPAEFIKNLNSLIK</sequence>